<dbReference type="EC" id="2.3.1.46" evidence="1"/>
<dbReference type="EMBL" id="CP000948">
    <property type="protein sequence ID" value="ACB05012.1"/>
    <property type="molecule type" value="Genomic_DNA"/>
</dbReference>
<dbReference type="SMR" id="B1XC12"/>
<dbReference type="KEGG" id="ecd:ECDH10B_4202"/>
<dbReference type="HOGENOM" id="CLU_057851_0_1_6"/>
<dbReference type="UniPathway" id="UPA00051">
    <property type="reaction ID" value="UER00075"/>
</dbReference>
<dbReference type="GO" id="GO:0005737">
    <property type="term" value="C:cytoplasm"/>
    <property type="evidence" value="ECO:0007669"/>
    <property type="project" value="UniProtKB-SubCell"/>
</dbReference>
<dbReference type="GO" id="GO:0004414">
    <property type="term" value="F:homoserine O-acetyltransferase activity"/>
    <property type="evidence" value="ECO:0007669"/>
    <property type="project" value="UniProtKB-UniRule"/>
</dbReference>
<dbReference type="GO" id="GO:0008899">
    <property type="term" value="F:homoserine O-succinyltransferase activity"/>
    <property type="evidence" value="ECO:0007669"/>
    <property type="project" value="UniProtKB-EC"/>
</dbReference>
<dbReference type="GO" id="GO:0019281">
    <property type="term" value="P:L-methionine biosynthetic process from homoserine via O-succinyl-L-homoserine and cystathionine"/>
    <property type="evidence" value="ECO:0007669"/>
    <property type="project" value="InterPro"/>
</dbReference>
<dbReference type="CDD" id="cd03131">
    <property type="entry name" value="GATase1_HTS"/>
    <property type="match status" value="1"/>
</dbReference>
<dbReference type="FunFam" id="3.40.50.880:FF:000004">
    <property type="entry name" value="Homoserine O-succinyltransferase"/>
    <property type="match status" value="1"/>
</dbReference>
<dbReference type="Gene3D" id="3.40.50.880">
    <property type="match status" value="1"/>
</dbReference>
<dbReference type="HAMAP" id="MF_00295">
    <property type="entry name" value="MetA_acyltransf"/>
    <property type="match status" value="1"/>
</dbReference>
<dbReference type="InterPro" id="IPR029062">
    <property type="entry name" value="Class_I_gatase-like"/>
</dbReference>
<dbReference type="InterPro" id="IPR005697">
    <property type="entry name" value="HST_MetA"/>
</dbReference>
<dbReference type="InterPro" id="IPR033752">
    <property type="entry name" value="MetA_family"/>
</dbReference>
<dbReference type="NCBIfam" id="TIGR01001">
    <property type="entry name" value="metA"/>
    <property type="match status" value="1"/>
</dbReference>
<dbReference type="PANTHER" id="PTHR20919">
    <property type="entry name" value="HOMOSERINE O-SUCCINYLTRANSFERASE"/>
    <property type="match status" value="1"/>
</dbReference>
<dbReference type="PANTHER" id="PTHR20919:SF0">
    <property type="entry name" value="HOMOSERINE O-SUCCINYLTRANSFERASE"/>
    <property type="match status" value="1"/>
</dbReference>
<dbReference type="Pfam" id="PF04204">
    <property type="entry name" value="HTS"/>
    <property type="match status" value="1"/>
</dbReference>
<dbReference type="PIRSF" id="PIRSF000450">
    <property type="entry name" value="H_ser_succinyltr"/>
    <property type="match status" value="1"/>
</dbReference>
<dbReference type="SUPFAM" id="SSF52317">
    <property type="entry name" value="Class I glutamine amidotransferase-like"/>
    <property type="match status" value="1"/>
</dbReference>
<accession>B1XC12</accession>
<protein>
    <recommendedName>
        <fullName evidence="1">Homoserine O-succinyltransferase</fullName>
        <shortName evidence="1">HST</shortName>
        <ecNumber evidence="1">2.3.1.46</ecNumber>
    </recommendedName>
    <alternativeName>
        <fullName evidence="1">Homoserine transsuccinylase</fullName>
        <shortName evidence="1">HTS</shortName>
    </alternativeName>
</protein>
<evidence type="ECO:0000255" key="1">
    <source>
        <dbReference type="HAMAP-Rule" id="MF_00295"/>
    </source>
</evidence>
<keyword id="KW-0012">Acyltransferase</keyword>
<keyword id="KW-0028">Amino-acid biosynthesis</keyword>
<keyword id="KW-0963">Cytoplasm</keyword>
<keyword id="KW-0486">Methionine biosynthesis</keyword>
<keyword id="KW-0808">Transferase</keyword>
<proteinExistence type="inferred from homology"/>
<sequence>MPIRVPDELPAVNFLREENVFVMTTSRASGQEIRPLKVLILNLMPKKIETENQFLRLLSNSPLQVDIQLLRIDSRESRNTPAEHLNNFYCNFEDIQDQNFDGLIVTGAPLGLVEFNDVAYWPQIKQVLEWSKDHVTSTLFVCWAVQAALNILYGIPKQTRTEKLSGVYEHHILHPHALLTRGFDDSFLAPHSRYADFPAALIRDYTDLEILAETEEGDAYLFASKDKRIAFVTGHPEYDAQTLAQEFFRDVEAGLDPDVPYNYFPHNDPQNTPRASWRSHGNLLFTNWLNYYVYQITPYDLRHMNPTLD</sequence>
<comment type="function">
    <text evidence="1">Transfers a succinyl group from succinyl-CoA to L-homoserine, forming succinyl-L-homoserine.</text>
</comment>
<comment type="catalytic activity">
    <reaction evidence="1">
        <text>L-homoserine + succinyl-CoA = O-succinyl-L-homoserine + CoA</text>
        <dbReference type="Rhea" id="RHEA:22008"/>
        <dbReference type="ChEBI" id="CHEBI:57287"/>
        <dbReference type="ChEBI" id="CHEBI:57292"/>
        <dbReference type="ChEBI" id="CHEBI:57476"/>
        <dbReference type="ChEBI" id="CHEBI:57661"/>
        <dbReference type="EC" id="2.3.1.46"/>
    </reaction>
</comment>
<comment type="pathway">
    <text evidence="1">Amino-acid biosynthesis; L-methionine biosynthesis via de novo pathway; O-succinyl-L-homoserine from L-homoserine: step 1/1.</text>
</comment>
<comment type="subunit">
    <text evidence="1">Homodimer.</text>
</comment>
<comment type="subcellular location">
    <subcellularLocation>
        <location evidence="1">Cytoplasm</location>
    </subcellularLocation>
</comment>
<comment type="similarity">
    <text evidence="1">Belongs to the MetA family.</text>
</comment>
<reference key="1">
    <citation type="journal article" date="2008" name="J. Bacteriol.">
        <title>The complete genome sequence of Escherichia coli DH10B: insights into the biology of a laboratory workhorse.</title>
        <authorList>
            <person name="Durfee T."/>
            <person name="Nelson R."/>
            <person name="Baldwin S."/>
            <person name="Plunkett G. III"/>
            <person name="Burland V."/>
            <person name="Mau B."/>
            <person name="Petrosino J.F."/>
            <person name="Qin X."/>
            <person name="Muzny D.M."/>
            <person name="Ayele M."/>
            <person name="Gibbs R.A."/>
            <person name="Csorgo B."/>
            <person name="Posfai G."/>
            <person name="Weinstock G.M."/>
            <person name="Blattner F.R."/>
        </authorList>
    </citation>
    <scope>NUCLEOTIDE SEQUENCE [LARGE SCALE GENOMIC DNA]</scope>
    <source>
        <strain>K12 / DH10B</strain>
    </source>
</reference>
<feature type="chain" id="PRO_1000115179" description="Homoserine O-succinyltransferase">
    <location>
        <begin position="1"/>
        <end position="309"/>
    </location>
</feature>
<feature type="active site" description="Acyl-thioester intermediate" evidence="1">
    <location>
        <position position="142"/>
    </location>
</feature>
<feature type="active site" description="Proton acceptor" evidence="1">
    <location>
        <position position="235"/>
    </location>
</feature>
<feature type="active site" evidence="1">
    <location>
        <position position="237"/>
    </location>
</feature>
<feature type="binding site" evidence="1">
    <location>
        <position position="163"/>
    </location>
    <ligand>
        <name>substrate</name>
    </ligand>
</feature>
<feature type="binding site" evidence="1">
    <location>
        <position position="192"/>
    </location>
    <ligand>
        <name>substrate</name>
    </ligand>
</feature>
<feature type="binding site" evidence="1">
    <location>
        <position position="249"/>
    </location>
    <ligand>
        <name>substrate</name>
    </ligand>
</feature>
<feature type="site" description="Important for acyl-CoA specificity" evidence="1">
    <location>
        <position position="111"/>
    </location>
</feature>
<feature type="site" description="Important for substrate specificity" evidence="1">
    <location>
        <position position="192"/>
    </location>
</feature>
<gene>
    <name evidence="1" type="primary">metAS</name>
    <name type="ordered locus">ECDH10B_4202</name>
</gene>
<name>METAS_ECODH</name>
<organism>
    <name type="scientific">Escherichia coli (strain K12 / DH10B)</name>
    <dbReference type="NCBI Taxonomy" id="316385"/>
    <lineage>
        <taxon>Bacteria</taxon>
        <taxon>Pseudomonadati</taxon>
        <taxon>Pseudomonadota</taxon>
        <taxon>Gammaproteobacteria</taxon>
        <taxon>Enterobacterales</taxon>
        <taxon>Enterobacteriaceae</taxon>
        <taxon>Escherichia</taxon>
    </lineage>
</organism>